<accession>A8H2P5</accession>
<feature type="chain" id="PRO_0000334718" description="Adenine phosphoribosyltransferase">
    <location>
        <begin position="1"/>
        <end position="183"/>
    </location>
</feature>
<proteinExistence type="inferred from homology"/>
<evidence type="ECO:0000255" key="1">
    <source>
        <dbReference type="HAMAP-Rule" id="MF_00004"/>
    </source>
</evidence>
<gene>
    <name evidence="1" type="primary">apt</name>
    <name type="ordered locus">Spea_1507</name>
</gene>
<comment type="function">
    <text evidence="1">Catalyzes a salvage reaction resulting in the formation of AMP, that is energically less costly than de novo synthesis.</text>
</comment>
<comment type="catalytic activity">
    <reaction evidence="1">
        <text>AMP + diphosphate = 5-phospho-alpha-D-ribose 1-diphosphate + adenine</text>
        <dbReference type="Rhea" id="RHEA:16609"/>
        <dbReference type="ChEBI" id="CHEBI:16708"/>
        <dbReference type="ChEBI" id="CHEBI:33019"/>
        <dbReference type="ChEBI" id="CHEBI:58017"/>
        <dbReference type="ChEBI" id="CHEBI:456215"/>
        <dbReference type="EC" id="2.4.2.7"/>
    </reaction>
</comment>
<comment type="pathway">
    <text evidence="1">Purine metabolism; AMP biosynthesis via salvage pathway; AMP from adenine: step 1/1.</text>
</comment>
<comment type="subunit">
    <text evidence="1">Homodimer.</text>
</comment>
<comment type="subcellular location">
    <subcellularLocation>
        <location evidence="1">Cytoplasm</location>
    </subcellularLocation>
</comment>
<comment type="similarity">
    <text evidence="1">Belongs to the purine/pyrimidine phosphoribosyltransferase family.</text>
</comment>
<name>APT_SHEPA</name>
<dbReference type="EC" id="2.4.2.7" evidence="1"/>
<dbReference type="EMBL" id="CP000851">
    <property type="protein sequence ID" value="ABV86832.1"/>
    <property type="molecule type" value="Genomic_DNA"/>
</dbReference>
<dbReference type="RefSeq" id="WP_012154756.1">
    <property type="nucleotide sequence ID" value="NC_009901.1"/>
</dbReference>
<dbReference type="SMR" id="A8H2P5"/>
<dbReference type="STRING" id="398579.Spea_1507"/>
<dbReference type="KEGG" id="spl:Spea_1507"/>
<dbReference type="eggNOG" id="COG0503">
    <property type="taxonomic scope" value="Bacteria"/>
</dbReference>
<dbReference type="HOGENOM" id="CLU_063339_3_0_6"/>
<dbReference type="OrthoDB" id="9803963at2"/>
<dbReference type="UniPathway" id="UPA00588">
    <property type="reaction ID" value="UER00646"/>
</dbReference>
<dbReference type="Proteomes" id="UP000002608">
    <property type="component" value="Chromosome"/>
</dbReference>
<dbReference type="GO" id="GO:0005737">
    <property type="term" value="C:cytoplasm"/>
    <property type="evidence" value="ECO:0007669"/>
    <property type="project" value="UniProtKB-SubCell"/>
</dbReference>
<dbReference type="GO" id="GO:0002055">
    <property type="term" value="F:adenine binding"/>
    <property type="evidence" value="ECO:0007669"/>
    <property type="project" value="TreeGrafter"/>
</dbReference>
<dbReference type="GO" id="GO:0003999">
    <property type="term" value="F:adenine phosphoribosyltransferase activity"/>
    <property type="evidence" value="ECO:0007669"/>
    <property type="project" value="UniProtKB-UniRule"/>
</dbReference>
<dbReference type="GO" id="GO:0016208">
    <property type="term" value="F:AMP binding"/>
    <property type="evidence" value="ECO:0007669"/>
    <property type="project" value="TreeGrafter"/>
</dbReference>
<dbReference type="GO" id="GO:0006168">
    <property type="term" value="P:adenine salvage"/>
    <property type="evidence" value="ECO:0007669"/>
    <property type="project" value="InterPro"/>
</dbReference>
<dbReference type="GO" id="GO:0044209">
    <property type="term" value="P:AMP salvage"/>
    <property type="evidence" value="ECO:0007669"/>
    <property type="project" value="UniProtKB-UniRule"/>
</dbReference>
<dbReference type="GO" id="GO:0006166">
    <property type="term" value="P:purine ribonucleoside salvage"/>
    <property type="evidence" value="ECO:0007669"/>
    <property type="project" value="UniProtKB-KW"/>
</dbReference>
<dbReference type="CDD" id="cd06223">
    <property type="entry name" value="PRTases_typeI"/>
    <property type="match status" value="1"/>
</dbReference>
<dbReference type="FunFam" id="3.40.50.2020:FF:000004">
    <property type="entry name" value="Adenine phosphoribosyltransferase"/>
    <property type="match status" value="1"/>
</dbReference>
<dbReference type="Gene3D" id="3.40.50.2020">
    <property type="match status" value="1"/>
</dbReference>
<dbReference type="HAMAP" id="MF_00004">
    <property type="entry name" value="Aden_phosphoribosyltr"/>
    <property type="match status" value="1"/>
</dbReference>
<dbReference type="InterPro" id="IPR005764">
    <property type="entry name" value="Ade_phspho_trans"/>
</dbReference>
<dbReference type="InterPro" id="IPR000836">
    <property type="entry name" value="PRibTrfase_dom"/>
</dbReference>
<dbReference type="InterPro" id="IPR029057">
    <property type="entry name" value="PRTase-like"/>
</dbReference>
<dbReference type="InterPro" id="IPR050054">
    <property type="entry name" value="UPRTase/APRTase"/>
</dbReference>
<dbReference type="NCBIfam" id="TIGR01090">
    <property type="entry name" value="apt"/>
    <property type="match status" value="1"/>
</dbReference>
<dbReference type="NCBIfam" id="NF002632">
    <property type="entry name" value="PRK02304.1-1"/>
    <property type="match status" value="1"/>
</dbReference>
<dbReference type="NCBIfam" id="NF002634">
    <property type="entry name" value="PRK02304.1-3"/>
    <property type="match status" value="1"/>
</dbReference>
<dbReference type="NCBIfam" id="NF002636">
    <property type="entry name" value="PRK02304.1-5"/>
    <property type="match status" value="1"/>
</dbReference>
<dbReference type="PANTHER" id="PTHR32315">
    <property type="entry name" value="ADENINE PHOSPHORIBOSYLTRANSFERASE"/>
    <property type="match status" value="1"/>
</dbReference>
<dbReference type="PANTHER" id="PTHR32315:SF3">
    <property type="entry name" value="ADENINE PHOSPHORIBOSYLTRANSFERASE"/>
    <property type="match status" value="1"/>
</dbReference>
<dbReference type="Pfam" id="PF00156">
    <property type="entry name" value="Pribosyltran"/>
    <property type="match status" value="1"/>
</dbReference>
<dbReference type="SUPFAM" id="SSF53271">
    <property type="entry name" value="PRTase-like"/>
    <property type="match status" value="1"/>
</dbReference>
<dbReference type="PROSITE" id="PS00103">
    <property type="entry name" value="PUR_PYR_PR_TRANSFER"/>
    <property type="match status" value="1"/>
</dbReference>
<organism>
    <name type="scientific">Shewanella pealeana (strain ATCC 700345 / ANG-SQ1)</name>
    <dbReference type="NCBI Taxonomy" id="398579"/>
    <lineage>
        <taxon>Bacteria</taxon>
        <taxon>Pseudomonadati</taxon>
        <taxon>Pseudomonadota</taxon>
        <taxon>Gammaproteobacteria</taxon>
        <taxon>Alteromonadales</taxon>
        <taxon>Shewanellaceae</taxon>
        <taxon>Shewanella</taxon>
    </lineage>
</organism>
<reference key="1">
    <citation type="submission" date="2007-10" db="EMBL/GenBank/DDBJ databases">
        <title>Complete sequence of Shewanella pealeana ATCC 700345.</title>
        <authorList>
            <consortium name="US DOE Joint Genome Institute"/>
            <person name="Copeland A."/>
            <person name="Lucas S."/>
            <person name="Lapidus A."/>
            <person name="Barry K."/>
            <person name="Glavina del Rio T."/>
            <person name="Dalin E."/>
            <person name="Tice H."/>
            <person name="Pitluck S."/>
            <person name="Chertkov O."/>
            <person name="Brettin T."/>
            <person name="Bruce D."/>
            <person name="Detter J.C."/>
            <person name="Han C."/>
            <person name="Schmutz J."/>
            <person name="Larimer F."/>
            <person name="Land M."/>
            <person name="Hauser L."/>
            <person name="Kyrpides N."/>
            <person name="Kim E."/>
            <person name="Zhao J.-S.Z."/>
            <person name="Manno D."/>
            <person name="Hawari J."/>
            <person name="Richardson P."/>
        </authorList>
    </citation>
    <scope>NUCLEOTIDE SEQUENCE [LARGE SCALE GENOMIC DNA]</scope>
    <source>
        <strain>ATCC 700345 / ANG-SQ1</strain>
    </source>
</reference>
<sequence length="183" mass="19986">MVMNTDSLALIKNSIKTIPNYPKEGILFRDVTSLLEDPQAYKLTIGLLVEHYKDQGFTKVVGTEARGFLFGAPLALELGIGFVPVRKPGKLPRETISESYELEYGHDVLEIHVDAINADDKVLVIDDLLATGGTIEATVKLIRKLGGSVNDAAFVISLPDLGGEERLKAMDLKLISLCEFEGE</sequence>
<keyword id="KW-0963">Cytoplasm</keyword>
<keyword id="KW-0328">Glycosyltransferase</keyword>
<keyword id="KW-0660">Purine salvage</keyword>
<keyword id="KW-1185">Reference proteome</keyword>
<keyword id="KW-0808">Transferase</keyword>
<protein>
    <recommendedName>
        <fullName evidence="1">Adenine phosphoribosyltransferase</fullName>
        <shortName evidence="1">APRT</shortName>
        <ecNumber evidence="1">2.4.2.7</ecNumber>
    </recommendedName>
</protein>